<gene>
    <name evidence="1" type="primary">coaE</name>
    <name type="ordered locus">LBA1548</name>
</gene>
<evidence type="ECO:0000255" key="1">
    <source>
        <dbReference type="HAMAP-Rule" id="MF_00376"/>
    </source>
</evidence>
<protein>
    <recommendedName>
        <fullName evidence="1">Dephospho-CoA kinase</fullName>
        <ecNumber evidence="1">2.7.1.24</ecNumber>
    </recommendedName>
    <alternativeName>
        <fullName evidence="1">Dephosphocoenzyme A kinase</fullName>
    </alternativeName>
</protein>
<name>COAE_LACAC</name>
<organism>
    <name type="scientific">Lactobacillus acidophilus (strain ATCC 700396 / NCK56 / N2 / NCFM)</name>
    <dbReference type="NCBI Taxonomy" id="272621"/>
    <lineage>
        <taxon>Bacteria</taxon>
        <taxon>Bacillati</taxon>
        <taxon>Bacillota</taxon>
        <taxon>Bacilli</taxon>
        <taxon>Lactobacillales</taxon>
        <taxon>Lactobacillaceae</taxon>
        <taxon>Lactobacillus</taxon>
    </lineage>
</organism>
<feature type="chain" id="PRO_0000243298" description="Dephospho-CoA kinase">
    <location>
        <begin position="1"/>
        <end position="200"/>
    </location>
</feature>
<feature type="domain" description="DPCK" evidence="1">
    <location>
        <begin position="4"/>
        <end position="200"/>
    </location>
</feature>
<feature type="binding site" evidence="1">
    <location>
        <begin position="12"/>
        <end position="17"/>
    </location>
    <ligand>
        <name>ATP</name>
        <dbReference type="ChEBI" id="CHEBI:30616"/>
    </ligand>
</feature>
<comment type="function">
    <text evidence="1">Catalyzes the phosphorylation of the 3'-hydroxyl group of dephosphocoenzyme A to form coenzyme A.</text>
</comment>
<comment type="catalytic activity">
    <reaction evidence="1">
        <text>3'-dephospho-CoA + ATP = ADP + CoA + H(+)</text>
        <dbReference type="Rhea" id="RHEA:18245"/>
        <dbReference type="ChEBI" id="CHEBI:15378"/>
        <dbReference type="ChEBI" id="CHEBI:30616"/>
        <dbReference type="ChEBI" id="CHEBI:57287"/>
        <dbReference type="ChEBI" id="CHEBI:57328"/>
        <dbReference type="ChEBI" id="CHEBI:456216"/>
        <dbReference type="EC" id="2.7.1.24"/>
    </reaction>
</comment>
<comment type="pathway">
    <text evidence="1">Cofactor biosynthesis; coenzyme A biosynthesis; CoA from (R)-pantothenate: step 5/5.</text>
</comment>
<comment type="subcellular location">
    <subcellularLocation>
        <location evidence="1">Cytoplasm</location>
    </subcellularLocation>
</comment>
<comment type="similarity">
    <text evidence="1">Belongs to the CoaE family.</text>
</comment>
<proteinExistence type="inferred from homology"/>
<sequence>MTYVLALTGGIATGKSTADQFFKNKNIPVVDCDQIAHDLMKPKNASWQAIKDNFGTEYLNSDQTINRKKLGQLVFSDPTALNKLNQLTHPLIFDKTIQKIKMYQDKDIVILDAPVYFESNLDKKKIANGVLVITLPEATQINRLKQRNNLTDEEAKMRIKSQMPLNKKAQMADFVIANTGTIEELENKLEQLLIKIKEEG</sequence>
<accession>Q5FIV9</accession>
<dbReference type="EC" id="2.7.1.24" evidence="1"/>
<dbReference type="EMBL" id="CP000033">
    <property type="protein sequence ID" value="AAV43365.1"/>
    <property type="molecule type" value="Genomic_DNA"/>
</dbReference>
<dbReference type="RefSeq" id="WP_003548347.1">
    <property type="nucleotide sequence ID" value="NC_006814.3"/>
</dbReference>
<dbReference type="RefSeq" id="YP_194396.1">
    <property type="nucleotide sequence ID" value="NC_006814.3"/>
</dbReference>
<dbReference type="SMR" id="Q5FIV9"/>
<dbReference type="STRING" id="272621.LBA1548"/>
<dbReference type="GeneID" id="93289386"/>
<dbReference type="KEGG" id="lac:LBA1548"/>
<dbReference type="PATRIC" id="fig|272621.13.peg.1470"/>
<dbReference type="eggNOG" id="COG0237">
    <property type="taxonomic scope" value="Bacteria"/>
</dbReference>
<dbReference type="HOGENOM" id="CLU_057180_0_0_9"/>
<dbReference type="OrthoDB" id="9812943at2"/>
<dbReference type="BioCyc" id="LACI272621:G1G49-1513-MONOMER"/>
<dbReference type="UniPathway" id="UPA00241">
    <property type="reaction ID" value="UER00356"/>
</dbReference>
<dbReference type="Proteomes" id="UP000006381">
    <property type="component" value="Chromosome"/>
</dbReference>
<dbReference type="GO" id="GO:0005737">
    <property type="term" value="C:cytoplasm"/>
    <property type="evidence" value="ECO:0007669"/>
    <property type="project" value="UniProtKB-SubCell"/>
</dbReference>
<dbReference type="GO" id="GO:0005524">
    <property type="term" value="F:ATP binding"/>
    <property type="evidence" value="ECO:0007669"/>
    <property type="project" value="UniProtKB-UniRule"/>
</dbReference>
<dbReference type="GO" id="GO:0004140">
    <property type="term" value="F:dephospho-CoA kinase activity"/>
    <property type="evidence" value="ECO:0007669"/>
    <property type="project" value="UniProtKB-UniRule"/>
</dbReference>
<dbReference type="GO" id="GO:0015937">
    <property type="term" value="P:coenzyme A biosynthetic process"/>
    <property type="evidence" value="ECO:0007669"/>
    <property type="project" value="UniProtKB-UniRule"/>
</dbReference>
<dbReference type="CDD" id="cd02022">
    <property type="entry name" value="DPCK"/>
    <property type="match status" value="1"/>
</dbReference>
<dbReference type="Gene3D" id="3.40.50.300">
    <property type="entry name" value="P-loop containing nucleotide triphosphate hydrolases"/>
    <property type="match status" value="1"/>
</dbReference>
<dbReference type="HAMAP" id="MF_00376">
    <property type="entry name" value="Dephospho_CoA_kinase"/>
    <property type="match status" value="1"/>
</dbReference>
<dbReference type="InterPro" id="IPR001977">
    <property type="entry name" value="Depp_CoAkinase"/>
</dbReference>
<dbReference type="InterPro" id="IPR027417">
    <property type="entry name" value="P-loop_NTPase"/>
</dbReference>
<dbReference type="NCBIfam" id="TIGR00152">
    <property type="entry name" value="dephospho-CoA kinase"/>
    <property type="match status" value="1"/>
</dbReference>
<dbReference type="PANTHER" id="PTHR10695:SF46">
    <property type="entry name" value="BIFUNCTIONAL COENZYME A SYNTHASE-RELATED"/>
    <property type="match status" value="1"/>
</dbReference>
<dbReference type="PANTHER" id="PTHR10695">
    <property type="entry name" value="DEPHOSPHO-COA KINASE-RELATED"/>
    <property type="match status" value="1"/>
</dbReference>
<dbReference type="Pfam" id="PF01121">
    <property type="entry name" value="CoaE"/>
    <property type="match status" value="1"/>
</dbReference>
<dbReference type="SUPFAM" id="SSF52540">
    <property type="entry name" value="P-loop containing nucleoside triphosphate hydrolases"/>
    <property type="match status" value="1"/>
</dbReference>
<dbReference type="PROSITE" id="PS51219">
    <property type="entry name" value="DPCK"/>
    <property type="match status" value="1"/>
</dbReference>
<reference key="1">
    <citation type="journal article" date="2005" name="Proc. Natl. Acad. Sci. U.S.A.">
        <title>Complete genome sequence of the probiotic lactic acid bacterium Lactobacillus acidophilus NCFM.</title>
        <authorList>
            <person name="Altermann E."/>
            <person name="Russell W.M."/>
            <person name="Azcarate-Peril M.A."/>
            <person name="Barrangou R."/>
            <person name="Buck B.L."/>
            <person name="McAuliffe O."/>
            <person name="Souther N."/>
            <person name="Dobson A."/>
            <person name="Duong T."/>
            <person name="Callanan M."/>
            <person name="Lick S."/>
            <person name="Hamrick A."/>
            <person name="Cano R."/>
            <person name="Klaenhammer T.R."/>
        </authorList>
    </citation>
    <scope>NUCLEOTIDE SEQUENCE [LARGE SCALE GENOMIC DNA]</scope>
    <source>
        <strain>ATCC 700396 / NCK56 / N2 / NCFM</strain>
    </source>
</reference>
<keyword id="KW-0067">ATP-binding</keyword>
<keyword id="KW-0173">Coenzyme A biosynthesis</keyword>
<keyword id="KW-0963">Cytoplasm</keyword>
<keyword id="KW-0418">Kinase</keyword>
<keyword id="KW-0547">Nucleotide-binding</keyword>
<keyword id="KW-1185">Reference proteome</keyword>
<keyword id="KW-0808">Transferase</keyword>